<keyword id="KW-0028">Amino-acid biosynthesis</keyword>
<keyword id="KW-0963">Cytoplasm</keyword>
<keyword id="KW-0220">Diaminopimelate biosynthesis</keyword>
<keyword id="KW-0457">Lysine biosynthesis</keyword>
<keyword id="KW-0520">NAD</keyword>
<keyword id="KW-0521">NADP</keyword>
<keyword id="KW-0560">Oxidoreductase</keyword>
<keyword id="KW-1185">Reference proteome</keyword>
<gene>
    <name evidence="1" type="primary">dapB</name>
    <name type="ordered locus">lp_1874</name>
</gene>
<evidence type="ECO:0000255" key="1">
    <source>
        <dbReference type="HAMAP-Rule" id="MF_00102"/>
    </source>
</evidence>
<evidence type="ECO:0000305" key="2"/>
<dbReference type="EC" id="1.17.1.8" evidence="1"/>
<dbReference type="EMBL" id="AL935263">
    <property type="protein sequence ID" value="CCC79143.1"/>
    <property type="molecule type" value="Genomic_DNA"/>
</dbReference>
<dbReference type="RefSeq" id="WP_011101578.1">
    <property type="nucleotide sequence ID" value="NC_004567.2"/>
</dbReference>
<dbReference type="RefSeq" id="YP_004889657.1">
    <property type="nucleotide sequence ID" value="NC_004567.2"/>
</dbReference>
<dbReference type="SMR" id="Q88W01"/>
<dbReference type="STRING" id="220668.lp_1874"/>
<dbReference type="EnsemblBacteria" id="CCC79143">
    <property type="protein sequence ID" value="CCC79143"/>
    <property type="gene ID" value="lp_1874"/>
</dbReference>
<dbReference type="KEGG" id="lpl:lp_1874"/>
<dbReference type="PATRIC" id="fig|220668.9.peg.1580"/>
<dbReference type="eggNOG" id="COG0289">
    <property type="taxonomic scope" value="Bacteria"/>
</dbReference>
<dbReference type="HOGENOM" id="CLU_047479_0_1_9"/>
<dbReference type="OrthoDB" id="9790352at2"/>
<dbReference type="PhylomeDB" id="Q88W01"/>
<dbReference type="UniPathway" id="UPA00034">
    <property type="reaction ID" value="UER00018"/>
</dbReference>
<dbReference type="Proteomes" id="UP000000432">
    <property type="component" value="Chromosome"/>
</dbReference>
<dbReference type="GO" id="GO:0005829">
    <property type="term" value="C:cytosol"/>
    <property type="evidence" value="ECO:0007669"/>
    <property type="project" value="TreeGrafter"/>
</dbReference>
<dbReference type="GO" id="GO:0008839">
    <property type="term" value="F:4-hydroxy-tetrahydrodipicolinate reductase"/>
    <property type="evidence" value="ECO:0007669"/>
    <property type="project" value="UniProtKB-EC"/>
</dbReference>
<dbReference type="GO" id="GO:0051287">
    <property type="term" value="F:NAD binding"/>
    <property type="evidence" value="ECO:0007669"/>
    <property type="project" value="UniProtKB-UniRule"/>
</dbReference>
<dbReference type="GO" id="GO:0050661">
    <property type="term" value="F:NADP binding"/>
    <property type="evidence" value="ECO:0007669"/>
    <property type="project" value="UniProtKB-UniRule"/>
</dbReference>
<dbReference type="GO" id="GO:0016726">
    <property type="term" value="F:oxidoreductase activity, acting on CH or CH2 groups, NAD or NADP as acceptor"/>
    <property type="evidence" value="ECO:0007669"/>
    <property type="project" value="UniProtKB-UniRule"/>
</dbReference>
<dbReference type="GO" id="GO:0019877">
    <property type="term" value="P:diaminopimelate biosynthetic process"/>
    <property type="evidence" value="ECO:0007669"/>
    <property type="project" value="UniProtKB-UniRule"/>
</dbReference>
<dbReference type="GO" id="GO:0009089">
    <property type="term" value="P:lysine biosynthetic process via diaminopimelate"/>
    <property type="evidence" value="ECO:0007669"/>
    <property type="project" value="UniProtKB-UniRule"/>
</dbReference>
<dbReference type="CDD" id="cd02274">
    <property type="entry name" value="DHDPR_N"/>
    <property type="match status" value="1"/>
</dbReference>
<dbReference type="FunFam" id="3.30.360.10:FF:000009">
    <property type="entry name" value="4-hydroxy-tetrahydrodipicolinate reductase"/>
    <property type="match status" value="1"/>
</dbReference>
<dbReference type="Gene3D" id="3.30.360.10">
    <property type="entry name" value="Dihydrodipicolinate Reductase, domain 2"/>
    <property type="match status" value="1"/>
</dbReference>
<dbReference type="Gene3D" id="3.40.50.720">
    <property type="entry name" value="NAD(P)-binding Rossmann-like Domain"/>
    <property type="match status" value="1"/>
</dbReference>
<dbReference type="HAMAP" id="MF_00102">
    <property type="entry name" value="DapB"/>
    <property type="match status" value="1"/>
</dbReference>
<dbReference type="InterPro" id="IPR022663">
    <property type="entry name" value="DapB_C"/>
</dbReference>
<dbReference type="InterPro" id="IPR000846">
    <property type="entry name" value="DapB_N"/>
</dbReference>
<dbReference type="InterPro" id="IPR022664">
    <property type="entry name" value="DapB_N_CS"/>
</dbReference>
<dbReference type="InterPro" id="IPR023940">
    <property type="entry name" value="DHDPR_bac"/>
</dbReference>
<dbReference type="InterPro" id="IPR036291">
    <property type="entry name" value="NAD(P)-bd_dom_sf"/>
</dbReference>
<dbReference type="NCBIfam" id="TIGR00036">
    <property type="entry name" value="dapB"/>
    <property type="match status" value="1"/>
</dbReference>
<dbReference type="PANTHER" id="PTHR20836:SF0">
    <property type="entry name" value="4-HYDROXY-TETRAHYDRODIPICOLINATE REDUCTASE 1, CHLOROPLASTIC-RELATED"/>
    <property type="match status" value="1"/>
</dbReference>
<dbReference type="PANTHER" id="PTHR20836">
    <property type="entry name" value="DIHYDRODIPICOLINATE REDUCTASE"/>
    <property type="match status" value="1"/>
</dbReference>
<dbReference type="Pfam" id="PF05173">
    <property type="entry name" value="DapB_C"/>
    <property type="match status" value="1"/>
</dbReference>
<dbReference type="Pfam" id="PF01113">
    <property type="entry name" value="DapB_N"/>
    <property type="match status" value="1"/>
</dbReference>
<dbReference type="PIRSF" id="PIRSF000161">
    <property type="entry name" value="DHPR"/>
    <property type="match status" value="1"/>
</dbReference>
<dbReference type="SUPFAM" id="SSF55347">
    <property type="entry name" value="Glyceraldehyde-3-phosphate dehydrogenase-like, C-terminal domain"/>
    <property type="match status" value="1"/>
</dbReference>
<dbReference type="SUPFAM" id="SSF51735">
    <property type="entry name" value="NAD(P)-binding Rossmann-fold domains"/>
    <property type="match status" value="1"/>
</dbReference>
<dbReference type="PROSITE" id="PS01298">
    <property type="entry name" value="DAPB"/>
    <property type="match status" value="1"/>
</dbReference>
<protein>
    <recommendedName>
        <fullName evidence="1">4-hydroxy-tetrahydrodipicolinate reductase</fullName>
        <shortName evidence="1">HTPA reductase</shortName>
        <ecNumber evidence="1">1.17.1.8</ecNumber>
    </recommendedName>
</protein>
<accession>Q88W01</accession>
<accession>F9UPK4</accession>
<comment type="function">
    <text evidence="1">Catalyzes the conversion of 4-hydroxy-tetrahydrodipicolinate (HTPA) to tetrahydrodipicolinate.</text>
</comment>
<comment type="catalytic activity">
    <reaction evidence="1">
        <text>(S)-2,3,4,5-tetrahydrodipicolinate + NAD(+) + H2O = (2S,4S)-4-hydroxy-2,3,4,5-tetrahydrodipicolinate + NADH + H(+)</text>
        <dbReference type="Rhea" id="RHEA:35323"/>
        <dbReference type="ChEBI" id="CHEBI:15377"/>
        <dbReference type="ChEBI" id="CHEBI:15378"/>
        <dbReference type="ChEBI" id="CHEBI:16845"/>
        <dbReference type="ChEBI" id="CHEBI:57540"/>
        <dbReference type="ChEBI" id="CHEBI:57945"/>
        <dbReference type="ChEBI" id="CHEBI:67139"/>
        <dbReference type="EC" id="1.17.1.8"/>
    </reaction>
</comment>
<comment type="catalytic activity">
    <reaction evidence="1">
        <text>(S)-2,3,4,5-tetrahydrodipicolinate + NADP(+) + H2O = (2S,4S)-4-hydroxy-2,3,4,5-tetrahydrodipicolinate + NADPH + H(+)</text>
        <dbReference type="Rhea" id="RHEA:35331"/>
        <dbReference type="ChEBI" id="CHEBI:15377"/>
        <dbReference type="ChEBI" id="CHEBI:15378"/>
        <dbReference type="ChEBI" id="CHEBI:16845"/>
        <dbReference type="ChEBI" id="CHEBI:57783"/>
        <dbReference type="ChEBI" id="CHEBI:58349"/>
        <dbReference type="ChEBI" id="CHEBI:67139"/>
        <dbReference type="EC" id="1.17.1.8"/>
    </reaction>
</comment>
<comment type="pathway">
    <text evidence="1">Amino-acid biosynthesis; L-lysine biosynthesis via DAP pathway; (S)-tetrahydrodipicolinate from L-aspartate: step 4/4.</text>
</comment>
<comment type="subcellular location">
    <subcellularLocation>
        <location evidence="1">Cytoplasm</location>
    </subcellularLocation>
</comment>
<comment type="similarity">
    <text evidence="1">Belongs to the DapB family.</text>
</comment>
<comment type="caution">
    <text evidence="2">Was originally thought to be a dihydrodipicolinate reductase (DHDPR), catalyzing the conversion of dihydrodipicolinate to tetrahydrodipicolinate. However, it was shown in E.coli that the substrate of the enzymatic reaction is not dihydrodipicolinate (DHDP) but in fact (2S,4S)-4-hydroxy-2,3,4,5-tetrahydrodipicolinic acid (HTPA), the product released by the DapA-catalyzed reaction.</text>
</comment>
<sequence length="261" mass="28554">MVKVIVAGYKGRMGSTAAQMVIDNPDFELVGVYDARSEEQNLGEDDRFKGQNVPAFHDLDQIKTDATVWIDFTIPTAVYENAKFALNHGISPVIGTTGMTDEQVAELQKLAKDKQVGGLIAPNFGISAVLLMQFAQQAAKYFPDVEIIEMHHDDKIDSPSGTAISTAKKIAEVRQPKEQGNPDATETLPGARGAEYEGMRIHAVRLPGLVAHEEVMFGGPGEGLTIRQDSFDRISFMTGVKVAVEKVNQYHELFVGLEHLL</sequence>
<name>DAPB_LACPL</name>
<feature type="chain" id="PRO_0000141449" description="4-hydroxy-tetrahydrodipicolinate reductase">
    <location>
        <begin position="1"/>
        <end position="261"/>
    </location>
</feature>
<feature type="active site" description="Proton donor/acceptor" evidence="1">
    <location>
        <position position="151"/>
    </location>
</feature>
<feature type="active site" description="Proton donor" evidence="1">
    <location>
        <position position="155"/>
    </location>
</feature>
<feature type="binding site" evidence="1">
    <location>
        <begin position="8"/>
        <end position="13"/>
    </location>
    <ligand>
        <name>NAD(+)</name>
        <dbReference type="ChEBI" id="CHEBI:57540"/>
    </ligand>
</feature>
<feature type="binding site" evidence="1">
    <location>
        <position position="36"/>
    </location>
    <ligand>
        <name>NADP(+)</name>
        <dbReference type="ChEBI" id="CHEBI:58349"/>
    </ligand>
</feature>
<feature type="binding site" evidence="1">
    <location>
        <begin position="95"/>
        <end position="97"/>
    </location>
    <ligand>
        <name>NAD(+)</name>
        <dbReference type="ChEBI" id="CHEBI:57540"/>
    </ligand>
</feature>
<feature type="binding site" evidence="1">
    <location>
        <begin position="121"/>
        <end position="124"/>
    </location>
    <ligand>
        <name>NAD(+)</name>
        <dbReference type="ChEBI" id="CHEBI:57540"/>
    </ligand>
</feature>
<feature type="binding site" evidence="1">
    <location>
        <position position="152"/>
    </location>
    <ligand>
        <name>(S)-2,3,4,5-tetrahydrodipicolinate</name>
        <dbReference type="ChEBI" id="CHEBI:16845"/>
    </ligand>
</feature>
<feature type="binding site" evidence="1">
    <location>
        <begin position="161"/>
        <end position="162"/>
    </location>
    <ligand>
        <name>(S)-2,3,4,5-tetrahydrodipicolinate</name>
        <dbReference type="ChEBI" id="CHEBI:16845"/>
    </ligand>
</feature>
<proteinExistence type="inferred from homology"/>
<organism>
    <name type="scientific">Lactiplantibacillus plantarum (strain ATCC BAA-793 / NCIMB 8826 / WCFS1)</name>
    <name type="common">Lactobacillus plantarum</name>
    <dbReference type="NCBI Taxonomy" id="220668"/>
    <lineage>
        <taxon>Bacteria</taxon>
        <taxon>Bacillati</taxon>
        <taxon>Bacillota</taxon>
        <taxon>Bacilli</taxon>
        <taxon>Lactobacillales</taxon>
        <taxon>Lactobacillaceae</taxon>
        <taxon>Lactiplantibacillus</taxon>
    </lineage>
</organism>
<reference key="1">
    <citation type="journal article" date="2003" name="Proc. Natl. Acad. Sci. U.S.A.">
        <title>Complete genome sequence of Lactobacillus plantarum WCFS1.</title>
        <authorList>
            <person name="Kleerebezem M."/>
            <person name="Boekhorst J."/>
            <person name="van Kranenburg R."/>
            <person name="Molenaar D."/>
            <person name="Kuipers O.P."/>
            <person name="Leer R."/>
            <person name="Tarchini R."/>
            <person name="Peters S.A."/>
            <person name="Sandbrink H.M."/>
            <person name="Fiers M.W.E.J."/>
            <person name="Stiekema W."/>
            <person name="Klein Lankhorst R.M."/>
            <person name="Bron P.A."/>
            <person name="Hoffer S.M."/>
            <person name="Nierop Groot M.N."/>
            <person name="Kerkhoven R."/>
            <person name="De Vries M."/>
            <person name="Ursing B."/>
            <person name="De Vos W.M."/>
            <person name="Siezen R.J."/>
        </authorList>
    </citation>
    <scope>NUCLEOTIDE SEQUENCE [LARGE SCALE GENOMIC DNA]</scope>
    <source>
        <strain>ATCC BAA-793 / NCIMB 8826 / WCFS1</strain>
    </source>
</reference>
<reference key="2">
    <citation type="journal article" date="2012" name="J. Bacteriol.">
        <title>Complete resequencing and reannotation of the Lactobacillus plantarum WCFS1 genome.</title>
        <authorList>
            <person name="Siezen R.J."/>
            <person name="Francke C."/>
            <person name="Renckens B."/>
            <person name="Boekhorst J."/>
            <person name="Wels M."/>
            <person name="Kleerebezem M."/>
            <person name="van Hijum S.A."/>
        </authorList>
    </citation>
    <scope>NUCLEOTIDE SEQUENCE [LARGE SCALE GENOMIC DNA]</scope>
    <scope>GENOME REANNOTATION</scope>
    <source>
        <strain>ATCC BAA-793 / NCIMB 8826 / WCFS1</strain>
    </source>
</reference>